<reference key="1">
    <citation type="journal article" date="2009" name="Proc. Natl. Acad. Sci. U.S.A.">
        <title>Characterizing a model human gut microbiota composed of members of its two dominant bacterial phyla.</title>
        <authorList>
            <person name="Mahowald M.A."/>
            <person name="Rey F.E."/>
            <person name="Seedorf H."/>
            <person name="Turnbaugh P.J."/>
            <person name="Fulton R.S."/>
            <person name="Wollam A."/>
            <person name="Shah N."/>
            <person name="Wang C."/>
            <person name="Magrini V."/>
            <person name="Wilson R.K."/>
            <person name="Cantarel B.L."/>
            <person name="Coutinho P.M."/>
            <person name="Henrissat B."/>
            <person name="Crock L.W."/>
            <person name="Russell A."/>
            <person name="Verberkmoes N.C."/>
            <person name="Hettich R.L."/>
            <person name="Gordon J.I."/>
        </authorList>
    </citation>
    <scope>NUCLEOTIDE SEQUENCE [LARGE SCALE GENOMIC DNA]</scope>
    <source>
        <strain>ATCC 27750 / DSM 3376 / VPI C15-48 / C15-B4</strain>
    </source>
</reference>
<dbReference type="EC" id="2.7.1.148" evidence="1"/>
<dbReference type="EMBL" id="CP001104">
    <property type="protein sequence ID" value="ACR71195.1"/>
    <property type="molecule type" value="Genomic_DNA"/>
</dbReference>
<dbReference type="RefSeq" id="WP_012738433.1">
    <property type="nucleotide sequence ID" value="NC_012778.1"/>
</dbReference>
<dbReference type="SMR" id="C4Z205"/>
<dbReference type="STRING" id="515620.EUBELI_00159"/>
<dbReference type="GeneID" id="41354947"/>
<dbReference type="KEGG" id="eel:EUBELI_00159"/>
<dbReference type="eggNOG" id="COG1947">
    <property type="taxonomic scope" value="Bacteria"/>
</dbReference>
<dbReference type="HOGENOM" id="CLU_053057_1_1_9"/>
<dbReference type="UniPathway" id="UPA00056">
    <property type="reaction ID" value="UER00094"/>
</dbReference>
<dbReference type="Proteomes" id="UP000001476">
    <property type="component" value="Chromosome"/>
</dbReference>
<dbReference type="GO" id="GO:0050515">
    <property type="term" value="F:4-(cytidine 5'-diphospho)-2-C-methyl-D-erythritol kinase activity"/>
    <property type="evidence" value="ECO:0007669"/>
    <property type="project" value="UniProtKB-UniRule"/>
</dbReference>
<dbReference type="GO" id="GO:0005524">
    <property type="term" value="F:ATP binding"/>
    <property type="evidence" value="ECO:0007669"/>
    <property type="project" value="UniProtKB-UniRule"/>
</dbReference>
<dbReference type="GO" id="GO:0019288">
    <property type="term" value="P:isopentenyl diphosphate biosynthetic process, methylerythritol 4-phosphate pathway"/>
    <property type="evidence" value="ECO:0007669"/>
    <property type="project" value="UniProtKB-UniRule"/>
</dbReference>
<dbReference type="GO" id="GO:0016114">
    <property type="term" value="P:terpenoid biosynthetic process"/>
    <property type="evidence" value="ECO:0007669"/>
    <property type="project" value="InterPro"/>
</dbReference>
<dbReference type="Gene3D" id="3.30.230.10">
    <property type="match status" value="1"/>
</dbReference>
<dbReference type="Gene3D" id="3.30.70.890">
    <property type="entry name" value="GHMP kinase, C-terminal domain"/>
    <property type="match status" value="1"/>
</dbReference>
<dbReference type="HAMAP" id="MF_00061">
    <property type="entry name" value="IspE"/>
    <property type="match status" value="1"/>
</dbReference>
<dbReference type="InterPro" id="IPR013750">
    <property type="entry name" value="GHMP_kinase_C_dom"/>
</dbReference>
<dbReference type="InterPro" id="IPR036554">
    <property type="entry name" value="GHMP_kinase_C_sf"/>
</dbReference>
<dbReference type="InterPro" id="IPR006204">
    <property type="entry name" value="GHMP_kinase_N_dom"/>
</dbReference>
<dbReference type="InterPro" id="IPR004424">
    <property type="entry name" value="IspE"/>
</dbReference>
<dbReference type="InterPro" id="IPR020568">
    <property type="entry name" value="Ribosomal_Su5_D2-typ_SF"/>
</dbReference>
<dbReference type="InterPro" id="IPR014721">
    <property type="entry name" value="Ribsml_uS5_D2-typ_fold_subgr"/>
</dbReference>
<dbReference type="NCBIfam" id="TIGR00154">
    <property type="entry name" value="ispE"/>
    <property type="match status" value="1"/>
</dbReference>
<dbReference type="PANTHER" id="PTHR43527">
    <property type="entry name" value="4-DIPHOSPHOCYTIDYL-2-C-METHYL-D-ERYTHRITOL KINASE, CHLOROPLASTIC"/>
    <property type="match status" value="1"/>
</dbReference>
<dbReference type="PANTHER" id="PTHR43527:SF2">
    <property type="entry name" value="4-DIPHOSPHOCYTIDYL-2-C-METHYL-D-ERYTHRITOL KINASE, CHLOROPLASTIC"/>
    <property type="match status" value="1"/>
</dbReference>
<dbReference type="Pfam" id="PF08544">
    <property type="entry name" value="GHMP_kinases_C"/>
    <property type="match status" value="1"/>
</dbReference>
<dbReference type="Pfam" id="PF00288">
    <property type="entry name" value="GHMP_kinases_N"/>
    <property type="match status" value="1"/>
</dbReference>
<dbReference type="PIRSF" id="PIRSF010376">
    <property type="entry name" value="IspE"/>
    <property type="match status" value="1"/>
</dbReference>
<dbReference type="SUPFAM" id="SSF55060">
    <property type="entry name" value="GHMP Kinase, C-terminal domain"/>
    <property type="match status" value="1"/>
</dbReference>
<dbReference type="SUPFAM" id="SSF54211">
    <property type="entry name" value="Ribosomal protein S5 domain 2-like"/>
    <property type="match status" value="1"/>
</dbReference>
<proteinExistence type="inferred from homology"/>
<keyword id="KW-0067">ATP-binding</keyword>
<keyword id="KW-0414">Isoprene biosynthesis</keyword>
<keyword id="KW-0418">Kinase</keyword>
<keyword id="KW-0547">Nucleotide-binding</keyword>
<keyword id="KW-1185">Reference proteome</keyword>
<keyword id="KW-0808">Transferase</keyword>
<evidence type="ECO:0000255" key="1">
    <source>
        <dbReference type="HAMAP-Rule" id="MF_00061"/>
    </source>
</evidence>
<organism>
    <name type="scientific">Lachnospira eligens (strain ATCC 27750 / DSM 3376 / VPI C15-48 / C15-B4)</name>
    <name type="common">Eubacterium eligens</name>
    <dbReference type="NCBI Taxonomy" id="515620"/>
    <lineage>
        <taxon>Bacteria</taxon>
        <taxon>Bacillati</taxon>
        <taxon>Bacillota</taxon>
        <taxon>Clostridia</taxon>
        <taxon>Lachnospirales</taxon>
        <taxon>Lachnospiraceae</taxon>
        <taxon>Lachnospira</taxon>
    </lineage>
</organism>
<gene>
    <name evidence="1" type="primary">ispE</name>
    <name type="ordered locus">EUBELI_00159</name>
</gene>
<comment type="function">
    <text evidence="1">Catalyzes the phosphorylation of the position 2 hydroxy group of 4-diphosphocytidyl-2C-methyl-D-erythritol.</text>
</comment>
<comment type="catalytic activity">
    <reaction evidence="1">
        <text>4-CDP-2-C-methyl-D-erythritol + ATP = 4-CDP-2-C-methyl-D-erythritol 2-phosphate + ADP + H(+)</text>
        <dbReference type="Rhea" id="RHEA:18437"/>
        <dbReference type="ChEBI" id="CHEBI:15378"/>
        <dbReference type="ChEBI" id="CHEBI:30616"/>
        <dbReference type="ChEBI" id="CHEBI:57823"/>
        <dbReference type="ChEBI" id="CHEBI:57919"/>
        <dbReference type="ChEBI" id="CHEBI:456216"/>
        <dbReference type="EC" id="2.7.1.148"/>
    </reaction>
</comment>
<comment type="pathway">
    <text evidence="1">Isoprenoid biosynthesis; isopentenyl diphosphate biosynthesis via DXP pathway; isopentenyl diphosphate from 1-deoxy-D-xylulose 5-phosphate: step 3/6.</text>
</comment>
<comment type="similarity">
    <text evidence="1">Belongs to the GHMP kinase family. IspE subfamily.</text>
</comment>
<sequence length="288" mass="31946">MESIRLKARAKINLGLDVIGRRENGYHDVRMVMQTVGLYDRIIMTRIPEEEIRIKTNIGFLPVNENNLVYKAIMLMKNKYKLDGGIEVDLNKFIPVAAGMAGGSSDAACALFGMNRLFELNVPMRELMKLGVEIGADVPYCLMRGTALAEGIGEKLTRLPDMPFCHILIAKPPVNVSTKLVYEKLDNTDVKLHPDIDGIIEAIKLKDVALVASRMGNVLESVTIPLYPVIDSIKKDMIEHGAINAMMSGSGPTVFGIFPDEQSMIACQQFLRQKGEARQVYTTETFTP</sequence>
<feature type="chain" id="PRO_1000202379" description="4-diphosphocytidyl-2-C-methyl-D-erythritol kinase">
    <location>
        <begin position="1"/>
        <end position="288"/>
    </location>
</feature>
<feature type="active site" evidence="1">
    <location>
        <position position="11"/>
    </location>
</feature>
<feature type="active site" evidence="1">
    <location>
        <position position="137"/>
    </location>
</feature>
<feature type="binding site" evidence="1">
    <location>
        <begin position="95"/>
        <end position="105"/>
    </location>
    <ligand>
        <name>ATP</name>
        <dbReference type="ChEBI" id="CHEBI:30616"/>
    </ligand>
</feature>
<accession>C4Z205</accession>
<protein>
    <recommendedName>
        <fullName evidence="1">4-diphosphocytidyl-2-C-methyl-D-erythritol kinase</fullName>
        <shortName evidence="1">CMK</shortName>
        <ecNumber evidence="1">2.7.1.148</ecNumber>
    </recommendedName>
    <alternativeName>
        <fullName evidence="1">4-(cytidine-5'-diphospho)-2-C-methyl-D-erythritol kinase</fullName>
    </alternativeName>
</protein>
<name>ISPE_LACE2</name>